<evidence type="ECO:0000255" key="1">
    <source>
        <dbReference type="HAMAP-Rule" id="MF_00565"/>
    </source>
</evidence>
<name>DLTC_LISMO</name>
<proteinExistence type="inferred from homology"/>
<organism>
    <name type="scientific">Listeria monocytogenes serovar 1/2a (strain ATCC BAA-679 / EGD-e)</name>
    <dbReference type="NCBI Taxonomy" id="169963"/>
    <lineage>
        <taxon>Bacteria</taxon>
        <taxon>Bacillati</taxon>
        <taxon>Bacillota</taxon>
        <taxon>Bacilli</taxon>
        <taxon>Bacillales</taxon>
        <taxon>Listeriaceae</taxon>
        <taxon>Listeria</taxon>
    </lineage>
</organism>
<reference key="1">
    <citation type="journal article" date="2002" name="Mol. Microbiol.">
        <title>Formation of D-alanyl-lipoteichoic acid is required for adhesion and virulence of Listeria monocytogenes.</title>
        <authorList>
            <person name="Abachin E."/>
            <person name="Poyart C."/>
            <person name="Pellegrini E."/>
            <person name="Milohanic E."/>
            <person name="Fiedler F."/>
            <person name="Berche P."/>
            <person name="Trieu-Cuot P."/>
        </authorList>
    </citation>
    <scope>NUCLEOTIDE SEQUENCE [GENOMIC DNA]</scope>
    <source>
        <strain>LO28 / Serovar 1/2c</strain>
    </source>
</reference>
<reference key="2">
    <citation type="journal article" date="2001" name="Science">
        <title>Comparative genomics of Listeria species.</title>
        <authorList>
            <person name="Glaser P."/>
            <person name="Frangeul L."/>
            <person name="Buchrieser C."/>
            <person name="Rusniok C."/>
            <person name="Amend A."/>
            <person name="Baquero F."/>
            <person name="Berche P."/>
            <person name="Bloecker H."/>
            <person name="Brandt P."/>
            <person name="Chakraborty T."/>
            <person name="Charbit A."/>
            <person name="Chetouani F."/>
            <person name="Couve E."/>
            <person name="de Daruvar A."/>
            <person name="Dehoux P."/>
            <person name="Domann E."/>
            <person name="Dominguez-Bernal G."/>
            <person name="Duchaud E."/>
            <person name="Durant L."/>
            <person name="Dussurget O."/>
            <person name="Entian K.-D."/>
            <person name="Fsihi H."/>
            <person name="Garcia-del Portillo F."/>
            <person name="Garrido P."/>
            <person name="Gautier L."/>
            <person name="Goebel W."/>
            <person name="Gomez-Lopez N."/>
            <person name="Hain T."/>
            <person name="Hauf J."/>
            <person name="Jackson D."/>
            <person name="Jones L.-M."/>
            <person name="Kaerst U."/>
            <person name="Kreft J."/>
            <person name="Kuhn M."/>
            <person name="Kunst F."/>
            <person name="Kurapkat G."/>
            <person name="Madueno E."/>
            <person name="Maitournam A."/>
            <person name="Mata Vicente J."/>
            <person name="Ng E."/>
            <person name="Nedjari H."/>
            <person name="Nordsiek G."/>
            <person name="Novella S."/>
            <person name="de Pablos B."/>
            <person name="Perez-Diaz J.-C."/>
            <person name="Purcell R."/>
            <person name="Remmel B."/>
            <person name="Rose M."/>
            <person name="Schlueter T."/>
            <person name="Simoes N."/>
            <person name="Tierrez A."/>
            <person name="Vazquez-Boland J.-A."/>
            <person name="Voss H."/>
            <person name="Wehland J."/>
            <person name="Cossart P."/>
        </authorList>
    </citation>
    <scope>NUCLEOTIDE SEQUENCE [LARGE SCALE GENOMIC DNA]</scope>
    <source>
        <strain>ATCC BAA-679 / EGD-e</strain>
    </source>
</reference>
<gene>
    <name evidence="1" type="primary">dltC</name>
    <name type="ordered locus">lmo0972</name>
</gene>
<dbReference type="EMBL" id="AJ012255">
    <property type="protein sequence ID" value="CAB51921.1"/>
    <property type="molecule type" value="Genomic_DNA"/>
</dbReference>
<dbReference type="EMBL" id="AL591977">
    <property type="protein sequence ID" value="CAC99050.1"/>
    <property type="molecule type" value="Genomic_DNA"/>
</dbReference>
<dbReference type="PIR" id="AD1196">
    <property type="entry name" value="AD1196"/>
</dbReference>
<dbReference type="RefSeq" id="NP_464497.1">
    <property type="nucleotide sequence ID" value="NC_003210.1"/>
</dbReference>
<dbReference type="RefSeq" id="WP_003722794.1">
    <property type="nucleotide sequence ID" value="NZ_CP149495.1"/>
</dbReference>
<dbReference type="SMR" id="Q9S389"/>
<dbReference type="STRING" id="169963.gene:17593628"/>
<dbReference type="PaxDb" id="169963-lmo0972"/>
<dbReference type="EnsemblBacteria" id="CAC99050">
    <property type="protein sequence ID" value="CAC99050"/>
    <property type="gene ID" value="CAC99050"/>
</dbReference>
<dbReference type="GeneID" id="93238854"/>
<dbReference type="GeneID" id="986460"/>
<dbReference type="KEGG" id="lmo:lmo0972"/>
<dbReference type="PATRIC" id="fig|169963.11.peg.999"/>
<dbReference type="eggNOG" id="COG0236">
    <property type="taxonomic scope" value="Bacteria"/>
</dbReference>
<dbReference type="HOGENOM" id="CLU_108696_19_0_9"/>
<dbReference type="OrthoDB" id="6462171at2"/>
<dbReference type="PhylomeDB" id="Q9S389"/>
<dbReference type="BioCyc" id="LMON169963:LMO0972-MONOMER"/>
<dbReference type="UniPathway" id="UPA00556"/>
<dbReference type="Proteomes" id="UP000000817">
    <property type="component" value="Chromosome"/>
</dbReference>
<dbReference type="GO" id="GO:0005737">
    <property type="term" value="C:cytoplasm"/>
    <property type="evidence" value="ECO:0007669"/>
    <property type="project" value="UniProtKB-SubCell"/>
</dbReference>
<dbReference type="GO" id="GO:0036370">
    <property type="term" value="F:D-alanyl carrier activity"/>
    <property type="evidence" value="ECO:0007669"/>
    <property type="project" value="UniProtKB-UniRule"/>
</dbReference>
<dbReference type="GO" id="GO:0071555">
    <property type="term" value="P:cell wall organization"/>
    <property type="evidence" value="ECO:0007669"/>
    <property type="project" value="UniProtKB-KW"/>
</dbReference>
<dbReference type="GO" id="GO:0070395">
    <property type="term" value="P:lipoteichoic acid biosynthetic process"/>
    <property type="evidence" value="ECO:0007669"/>
    <property type="project" value="UniProtKB-UniRule"/>
</dbReference>
<dbReference type="FunFam" id="1.10.1200.10:FF:000004">
    <property type="entry name" value="D-alanyl carrier protein"/>
    <property type="match status" value="1"/>
</dbReference>
<dbReference type="Gene3D" id="1.10.1200.10">
    <property type="entry name" value="ACP-like"/>
    <property type="match status" value="1"/>
</dbReference>
<dbReference type="HAMAP" id="MF_00565">
    <property type="entry name" value="DltC"/>
    <property type="match status" value="1"/>
</dbReference>
<dbReference type="InterPro" id="IPR036736">
    <property type="entry name" value="ACP-like_sf"/>
</dbReference>
<dbReference type="InterPro" id="IPR003230">
    <property type="entry name" value="DltC"/>
</dbReference>
<dbReference type="InterPro" id="IPR009081">
    <property type="entry name" value="PP-bd_ACP"/>
</dbReference>
<dbReference type="NCBIfam" id="TIGR01688">
    <property type="entry name" value="dltC"/>
    <property type="match status" value="1"/>
</dbReference>
<dbReference type="NCBIfam" id="NF003464">
    <property type="entry name" value="PRK05087.1"/>
    <property type="match status" value="1"/>
</dbReference>
<dbReference type="Pfam" id="PF00550">
    <property type="entry name" value="PP-binding"/>
    <property type="match status" value="1"/>
</dbReference>
<dbReference type="SUPFAM" id="SSF47336">
    <property type="entry name" value="ACP-like"/>
    <property type="match status" value="1"/>
</dbReference>
<dbReference type="PROSITE" id="PS50075">
    <property type="entry name" value="CARRIER"/>
    <property type="match status" value="1"/>
</dbReference>
<accession>Q9S389</accession>
<keyword id="KW-0961">Cell wall biogenesis/degradation</keyword>
<keyword id="KW-0963">Cytoplasm</keyword>
<keyword id="KW-0596">Phosphopantetheine</keyword>
<keyword id="KW-0597">Phosphoprotein</keyword>
<keyword id="KW-1185">Reference proteome</keyword>
<keyword id="KW-0843">Virulence</keyword>
<comment type="function">
    <text evidence="1">Carrier protein involved in the D-alanylation of lipoteichoic acid (LTA). The loading of thioester-linked D-alanine onto DltC is catalyzed by D-alanine--D-alanyl carrier protein ligase DltA. The DltC-carried D-alanyl group is further transferred to cell membrane phosphatidylglycerol (PG) by forming an ester bond, probably catalyzed by DltD. D-alanylation of LTA plays an important role in modulating the properties of the cell wall in Gram-positive bacteria, influencing the net charge of the cell wall.</text>
</comment>
<comment type="pathway">
    <text evidence="1">Cell wall biogenesis; lipoteichoic acid biosynthesis.</text>
</comment>
<comment type="subcellular location">
    <subcellularLocation>
        <location evidence="1">Cytoplasm</location>
    </subcellularLocation>
</comment>
<comment type="PTM">
    <text evidence="1">4'-phosphopantetheine is transferred from CoA to a specific serine of apo-DCP.</text>
</comment>
<comment type="similarity">
    <text evidence="1">Belongs to the DltC family.</text>
</comment>
<feature type="chain" id="PRO_0000213096" description="D-alanyl carrier protein">
    <location>
        <begin position="1"/>
        <end position="78"/>
    </location>
</feature>
<feature type="domain" description="Carrier" evidence="1">
    <location>
        <begin position="1"/>
        <end position="78"/>
    </location>
</feature>
<feature type="modified residue" description="O-(pantetheine 4'-phosphoryl)serine" evidence="1">
    <location>
        <position position="36"/>
    </location>
</feature>
<protein>
    <recommendedName>
        <fullName evidence="1">D-alanyl carrier protein</fullName>
        <shortName evidence="1">DCP</shortName>
    </recommendedName>
    <alternativeName>
        <fullName evidence="1">D-alanine--poly(phosphoribitol) ligase subunit 2</fullName>
    </alternativeName>
</protein>
<sequence>MAFRENVLEILEEITETDEVVQNTNIKLFDEGLLDSMATVQLLIEIEEKLDITVPVSEFDRDEWATPEMIITQLEALK</sequence>